<keyword id="KW-0167">Capsid protein</keyword>
<keyword id="KW-1152">Outer capsid protein</keyword>
<keyword id="KW-1185">Reference proteome</keyword>
<keyword id="KW-0946">Virion</keyword>
<proteinExistence type="predicted"/>
<organism>
    <name type="scientific">Rice ragged stunt virus (isolate Thailand)</name>
    <name type="common">RRSV</name>
    <dbReference type="NCBI Taxonomy" id="649603"/>
    <lineage>
        <taxon>Viruses</taxon>
        <taxon>Riboviria</taxon>
        <taxon>Orthornavirae</taxon>
        <taxon>Duplornaviricota</taxon>
        <taxon>Resentoviricetes</taxon>
        <taxon>Reovirales</taxon>
        <taxon>Spinareoviridae</taxon>
        <taxon>Oryzavirus</taxon>
        <taxon>Rice ragged stunt virus</taxon>
    </lineage>
</organism>
<dbReference type="EMBL" id="U33633">
    <property type="protein sequence ID" value="AAB49578.1"/>
    <property type="molecule type" value="Genomic_RNA"/>
</dbReference>
<dbReference type="RefSeq" id="NP_620529.1">
    <property type="nucleotide sequence ID" value="NC_003759.1"/>
</dbReference>
<dbReference type="GeneID" id="991201"/>
<dbReference type="KEGG" id="vg:991201"/>
<dbReference type="Proteomes" id="UP000000348">
    <property type="component" value="Genome"/>
</dbReference>
<dbReference type="GO" id="GO:0039624">
    <property type="term" value="C:viral outer capsid"/>
    <property type="evidence" value="ECO:0007669"/>
    <property type="project" value="UniProtKB-KW"/>
</dbReference>
<accession>Q86281</accession>
<evidence type="ECO:0000305" key="1"/>
<sequence length="808" mass="91328">MDKFAEIRKRLKQKHNEWLQQTAAERIEQDAGIKMTARTIQGLRITRNSKNDESSLHVDSATDLEMDVTGASKFESKKETFDYRPNTSSSRIVLTPKSNDCKTEKKLVSGDDVTEISRPTSSSAVEISELPEVCVKVVFSQPCDVSRYPSDATKVRITKCDHANWRGWRSFLHALGICNREIQDSFLEQAASGCSAHVKDVVTAFDRGENLELLCAMAGVNVCLVNVSDEEIELIKISPEPLTCVVRIDFVGSEIKCLPCHATDAALASLFKTALRVYDYGRRIPWMHLSETVTFLSLDKTRTRVNVSNLCFDDGWRNIFEALNNDYPELYLVPENGDPEARSRCFIDPERQIEEEERYRAAKEAYLKRMNTPLEWWQEEVLTLTDGEREPKLDEFFFRTLLPRIIRQNAHCGDNPTEKLPMIGFGFDAIMKSRAERASQMSIGAKGNAGKEVGLPLRYKQHVINFRKREMHQKNSNIMTGYLPGGLLHDTLGGIVICLRLDIFEDTVISVYGIYNGMKLIRLICMICVYSGINIPGRPYFVYEVGEGILLTPGMFEEYFTGARTVSRLTSTHGVIHLGKLERCVRQFNNYLSAFKIKPGEIIDRSRAPRCKAKEKKFVPRSVGKGVFYASDLANYPFEINRHDKRSGLFHVGEIDFQAAISSIWPQMMCHYMASEDREDKQDDEKSKSDNFLVPEAVDPSLVIPSAAIYDCGMSKVNPENAKVKTRGNKLLLPCGMLEHCRATSLTKHRCLLPYLGVLACDLPYGSERMPACLGCGRLYPQQILAKLCAQVRCPAWPSTSDCLIRSE</sequence>
<comment type="subcellular location">
    <subcellularLocation>
        <location evidence="1">Virion</location>
    </subcellularLocation>
</comment>
<reference key="1">
    <citation type="journal article" date="1996" name="J. Gen. Virol.">
        <title>Genome segment 5 of rice ragged stunt virus encodes a virion protein.</title>
        <authorList>
            <person name="Li Z."/>
            <person name="Upadhyaya N.M."/>
            <person name="Kositratana W."/>
            <person name="Gibbs A.J."/>
            <person name="Waterhouse P.M."/>
        </authorList>
    </citation>
    <scope>NUCLEOTIDE SEQUENCE [GENOMIC RNA]</scope>
</reference>
<organismHost>
    <name type="scientific">Oryza latifolia</name>
    <dbReference type="NCBI Taxonomy" id="4534"/>
</organismHost>
<organismHost>
    <name type="scientific">Oryza nivara</name>
    <name type="common">Indian wild rice</name>
    <name type="synonym">Oryza sativa f. spontanea</name>
    <dbReference type="NCBI Taxonomy" id="4536"/>
</organismHost>
<organismHost>
    <name type="scientific">Oryza rufipogon</name>
    <name type="common">Brownbeard rice</name>
    <name type="synonym">Asian wild rice</name>
    <dbReference type="NCBI Taxonomy" id="4529"/>
</organismHost>
<protein>
    <recommendedName>
        <fullName>Putative minor structural protein VP5</fullName>
    </recommendedName>
</protein>
<name>VP5_RRSVT</name>
<feature type="chain" id="PRO_0000403637" description="Putative minor structural protein VP5">
    <location>
        <begin position="1"/>
        <end position="808"/>
    </location>
</feature>